<reference key="1">
    <citation type="journal article" date="2007" name="Nat. Biotechnol.">
        <title>Comparative analysis of the complete genome sequence of the plant growth-promoting bacterium Bacillus amyloliquefaciens FZB42.</title>
        <authorList>
            <person name="Chen X.H."/>
            <person name="Koumoutsi A."/>
            <person name="Scholz R."/>
            <person name="Eisenreich A."/>
            <person name="Schneider K."/>
            <person name="Heinemeyer I."/>
            <person name="Morgenstern B."/>
            <person name="Voss B."/>
            <person name="Hess W.R."/>
            <person name="Reva O."/>
            <person name="Junge H."/>
            <person name="Voigt B."/>
            <person name="Jungblut P.R."/>
            <person name="Vater J."/>
            <person name="Suessmuth R."/>
            <person name="Liesegang H."/>
            <person name="Strittmatter A."/>
            <person name="Gottschalk G."/>
            <person name="Borriss R."/>
        </authorList>
    </citation>
    <scope>NUCLEOTIDE SEQUENCE [LARGE SCALE GENOMIC DNA]</scope>
    <source>
        <strain>DSM 23117 / BGSC 10A6 / LMG 26770 / FZB42</strain>
    </source>
</reference>
<protein>
    <recommendedName>
        <fullName evidence="1">Hut operon positive regulatory protein</fullName>
    </recommendedName>
</protein>
<organism>
    <name type="scientific">Bacillus velezensis (strain DSM 23117 / BGSC 10A6 / LMG 26770 / FZB42)</name>
    <name type="common">Bacillus amyloliquefaciens subsp. plantarum</name>
    <dbReference type="NCBI Taxonomy" id="326423"/>
    <lineage>
        <taxon>Bacteria</taxon>
        <taxon>Bacillati</taxon>
        <taxon>Bacillota</taxon>
        <taxon>Bacilli</taxon>
        <taxon>Bacillales</taxon>
        <taxon>Bacillaceae</taxon>
        <taxon>Bacillus</taxon>
        <taxon>Bacillus amyloliquefaciens group</taxon>
    </lineage>
</organism>
<dbReference type="EMBL" id="CP000560">
    <property type="protein sequence ID" value="ABS75969.1"/>
    <property type="molecule type" value="Genomic_DNA"/>
</dbReference>
<dbReference type="RefSeq" id="WP_004393292.1">
    <property type="nucleotide sequence ID" value="NC_009725.2"/>
</dbReference>
<dbReference type="SMR" id="A7ZAE3"/>
<dbReference type="GeneID" id="93082780"/>
<dbReference type="KEGG" id="bay:RBAM_036400"/>
<dbReference type="HOGENOM" id="CLU_148478_0_0_9"/>
<dbReference type="Proteomes" id="UP000001120">
    <property type="component" value="Chromosome"/>
</dbReference>
<dbReference type="GO" id="GO:0003729">
    <property type="term" value="F:mRNA binding"/>
    <property type="evidence" value="ECO:0007669"/>
    <property type="project" value="UniProtKB-UniRule"/>
</dbReference>
<dbReference type="GO" id="GO:0006547">
    <property type="term" value="P:L-histidine metabolic process"/>
    <property type="evidence" value="ECO:0007669"/>
    <property type="project" value="UniProtKB-UniRule"/>
</dbReference>
<dbReference type="GO" id="GO:0010628">
    <property type="term" value="P:positive regulation of gene expression"/>
    <property type="evidence" value="ECO:0007669"/>
    <property type="project" value="UniProtKB-UniRule"/>
</dbReference>
<dbReference type="CDD" id="cd11640">
    <property type="entry name" value="HutP"/>
    <property type="match status" value="1"/>
</dbReference>
<dbReference type="Gene3D" id="3.40.1510.10">
    <property type="entry name" value="Hut operon regulatory protein HutP"/>
    <property type="match status" value="1"/>
</dbReference>
<dbReference type="HAMAP" id="MF_00779">
    <property type="entry name" value="HutP"/>
    <property type="match status" value="1"/>
</dbReference>
<dbReference type="InterPro" id="IPR015111">
    <property type="entry name" value="Regulatory_HutP"/>
</dbReference>
<dbReference type="InterPro" id="IPR023552">
    <property type="entry name" value="Regulatory_HutP_bacillales"/>
</dbReference>
<dbReference type="InterPro" id="IPR036482">
    <property type="entry name" value="Regulatory_HutP_sf"/>
</dbReference>
<dbReference type="NCBIfam" id="NF002838">
    <property type="entry name" value="PRK03065.1"/>
    <property type="match status" value="1"/>
</dbReference>
<dbReference type="Pfam" id="PF09021">
    <property type="entry name" value="HutP"/>
    <property type="match status" value="1"/>
</dbReference>
<dbReference type="SUPFAM" id="SSF111064">
    <property type="entry name" value="Hut operon positive regulatory protein HutP"/>
    <property type="match status" value="1"/>
</dbReference>
<name>HUTP_BACVZ</name>
<sequence>MTLHKDRRIGRLSVLLLLHETEENQQISRLERDGWKVCLGRVGSMDAHKVVAAIETASKKSGVIQSEGYRESHALYHATMEALHGVTRGEMLLGSLLRTVGLKFAVLRGNPYESEAEGDWIAVSLYGTIGAPIKGLEHETFGVGINHI</sequence>
<feature type="chain" id="PRO_1000148456" description="Hut operon positive regulatory protein">
    <location>
        <begin position="1"/>
        <end position="148"/>
    </location>
</feature>
<proteinExistence type="inferred from homology"/>
<gene>
    <name evidence="1" type="primary">hutP</name>
    <name type="ordered locus">RBAM_036400</name>
</gene>
<evidence type="ECO:0000255" key="1">
    <source>
        <dbReference type="HAMAP-Rule" id="MF_00779"/>
    </source>
</evidence>
<accession>A7ZAE3</accession>
<keyword id="KW-0010">Activator</keyword>
<keyword id="KW-0369">Histidine metabolism</keyword>
<keyword id="KW-0694">RNA-binding</keyword>
<keyword id="KW-0804">Transcription</keyword>
<keyword id="KW-0805">Transcription regulation</keyword>
<comment type="function">
    <text evidence="1">Antiterminator that binds to cis-acting regulatory sequences on the mRNA in the presence of histidine, thereby suppressing transcription termination and activating the hut operon for histidine utilization.</text>
</comment>
<comment type="subunit">
    <text evidence="1">Homohexamer.</text>
</comment>
<comment type="similarity">
    <text evidence="1">Belongs to the HutP family.</text>
</comment>